<protein>
    <recommendedName>
        <fullName>NADH dehydrogenase [ubiquinone] 1 beta subcomplex subunit 10</fullName>
    </recommendedName>
    <alternativeName>
        <fullName>Complex I-PDSW</fullName>
        <shortName>CI-PDSW</shortName>
    </alternativeName>
    <alternativeName>
        <fullName>NADH-ubiquinone oxidoreductase PDSW subunit</fullName>
    </alternativeName>
</protein>
<comment type="function">
    <text evidence="1">Accessory subunit that is involved in the functional assembly of the mitochondrial respiratory chain complex I. Complex I has an NADH dehydrogenase activity with ubiquinone as an immediate electron acceptor and mediates the transfer of electrons from NADH to the respiratory chain.</text>
</comment>
<comment type="subunit">
    <text evidence="1">Complex I is composed of 45 different subunits. Interacts with CHCHD4.</text>
</comment>
<comment type="subcellular location">
    <subcellularLocation>
        <location evidence="1">Mitochondrion inner membrane</location>
        <topology evidence="1">Peripheral membrane protein</topology>
        <orientation evidence="1">Matrix side</orientation>
    </subcellularLocation>
</comment>
<comment type="similarity">
    <text evidence="2">Belongs to the complex I NDUFB10 subunit family.</text>
</comment>
<reference key="1">
    <citation type="journal article" date="2006" name="Gene">
        <title>Adaptive selection of mitochondrial complex I subunits during primate radiation.</title>
        <authorList>
            <person name="Mishmar D."/>
            <person name="Ruiz-Pesini E."/>
            <person name="Mondragon-Palomino M."/>
            <person name="Procaccio V."/>
            <person name="Gaut B."/>
            <person name="Wallace D.C."/>
        </authorList>
    </citation>
    <scope>NUCLEOTIDE SEQUENCE [MRNA]</scope>
</reference>
<organism>
    <name type="scientific">Gorilla gorilla gorilla</name>
    <name type="common">Western lowland gorilla</name>
    <dbReference type="NCBI Taxonomy" id="9595"/>
    <lineage>
        <taxon>Eukaryota</taxon>
        <taxon>Metazoa</taxon>
        <taxon>Chordata</taxon>
        <taxon>Craniata</taxon>
        <taxon>Vertebrata</taxon>
        <taxon>Euteleostomi</taxon>
        <taxon>Mammalia</taxon>
        <taxon>Eutheria</taxon>
        <taxon>Euarchontoglires</taxon>
        <taxon>Primates</taxon>
        <taxon>Haplorrhini</taxon>
        <taxon>Catarrhini</taxon>
        <taxon>Hominidae</taxon>
        <taxon>Gorilla</taxon>
    </lineage>
</organism>
<gene>
    <name type="primary">NDUFB10</name>
</gene>
<accession>Q0MQF2</accession>
<dbReference type="EMBL" id="DQ885682">
    <property type="protein sequence ID" value="ABH12191.1"/>
    <property type="molecule type" value="mRNA"/>
</dbReference>
<dbReference type="RefSeq" id="NP_001266583.1">
    <property type="nucleotide sequence ID" value="NM_001279654.1"/>
</dbReference>
<dbReference type="SMR" id="Q0MQF2"/>
<dbReference type="FunCoup" id="Q0MQF2">
    <property type="interactions" value="806"/>
</dbReference>
<dbReference type="STRING" id="9593.ENSGGOP00000009152"/>
<dbReference type="Ensembl" id="ENSGGOT00000009406.3">
    <property type="protein sequence ID" value="ENSGGOP00000009152.2"/>
    <property type="gene ID" value="ENSGGOG00000009367.3"/>
</dbReference>
<dbReference type="GeneID" id="101130361"/>
<dbReference type="KEGG" id="ggo:101130361"/>
<dbReference type="CTD" id="4716"/>
<dbReference type="eggNOG" id="KOG4009">
    <property type="taxonomic scope" value="Eukaryota"/>
</dbReference>
<dbReference type="GeneTree" id="ENSGT00390000006348"/>
<dbReference type="HOGENOM" id="CLU_112615_1_0_1"/>
<dbReference type="InParanoid" id="Q0MQF2"/>
<dbReference type="OMA" id="CKPILEQ"/>
<dbReference type="Proteomes" id="UP000001519">
    <property type="component" value="Chromosome 16"/>
</dbReference>
<dbReference type="Bgee" id="ENSGGOG00000009367">
    <property type="expression patterns" value="Expressed in heart and 5 other cell types or tissues"/>
</dbReference>
<dbReference type="GO" id="GO:0005743">
    <property type="term" value="C:mitochondrial inner membrane"/>
    <property type="evidence" value="ECO:0000250"/>
    <property type="project" value="UniProtKB"/>
</dbReference>
<dbReference type="GO" id="GO:0045271">
    <property type="term" value="C:respiratory chain complex I"/>
    <property type="evidence" value="ECO:0000250"/>
    <property type="project" value="UniProtKB"/>
</dbReference>
<dbReference type="InterPro" id="IPR019377">
    <property type="entry name" value="NADH_UbQ_OxRdtase_su10"/>
</dbReference>
<dbReference type="InterPro" id="IPR039993">
    <property type="entry name" value="NDUFB10"/>
</dbReference>
<dbReference type="PANTHER" id="PTHR13094:SF1">
    <property type="entry name" value="NADH DEHYDROGENASE [UBIQUINONE] 1 BETA SUBCOMPLEX SUBUNIT 10"/>
    <property type="match status" value="1"/>
</dbReference>
<dbReference type="PANTHER" id="PTHR13094">
    <property type="entry name" value="NADH-UBIQUINONE OXIDOREDUCTASE PDSW SUBUNIT"/>
    <property type="match status" value="1"/>
</dbReference>
<dbReference type="Pfam" id="PF10249">
    <property type="entry name" value="NDUFB10"/>
    <property type="match status" value="1"/>
</dbReference>
<evidence type="ECO:0000250" key="1">
    <source>
        <dbReference type="UniProtKB" id="O96000"/>
    </source>
</evidence>
<evidence type="ECO:0000305" key="2"/>
<proteinExistence type="evidence at transcript level"/>
<keyword id="KW-0249">Electron transport</keyword>
<keyword id="KW-0472">Membrane</keyword>
<keyword id="KW-0496">Mitochondrion</keyword>
<keyword id="KW-0999">Mitochondrion inner membrane</keyword>
<keyword id="KW-0597">Phosphoprotein</keyword>
<keyword id="KW-1185">Reference proteome</keyword>
<keyword id="KW-0679">Respiratory chain</keyword>
<keyword id="KW-0813">Transport</keyword>
<feature type="chain" id="PRO_0000251843" description="NADH dehydrogenase [ubiquinone] 1 beta subcomplex subunit 10">
    <location>
        <begin position="1"/>
        <end position="172"/>
    </location>
</feature>
<feature type="modified residue" description="Phosphoserine" evidence="1">
    <location>
        <position position="145"/>
    </location>
</feature>
<name>NDUBA_GORGO</name>
<sequence length="172" mass="20834">MPDSWDKDVYPEPPRRTPVLPNPIVYMMKAFDLIVDRPVTLVREFIERQHAKNRYYYYHRQYRRVPDITECKEEDIMCVYEAEMQWRRDYKVDQEIINIMQDRLKACQQREGQNYQQNCIKEVEQFTQVAKAYQDRYQDLGAYYSARKCLAKQRQRMLQERKAAKEAAAATS</sequence>